<proteinExistence type="inferred from homology"/>
<comment type="function">
    <text evidence="1">Located on the platform of the 30S subunit, it bridges several disparate RNA helices of the 16S rRNA. Forms part of the Shine-Dalgarno cleft in the 70S ribosome.</text>
</comment>
<comment type="subunit">
    <text evidence="1">Part of the 30S ribosomal subunit. Interacts with proteins S7 and S18. Binds to IF-3.</text>
</comment>
<comment type="similarity">
    <text evidence="1">Belongs to the universal ribosomal protein uS11 family.</text>
</comment>
<reference key="1">
    <citation type="submission" date="2007-07" db="EMBL/GenBank/DDBJ databases">
        <title>Complete sequence of chromosome of Xanthobacter autotrophicus Py2.</title>
        <authorList>
            <consortium name="US DOE Joint Genome Institute"/>
            <person name="Copeland A."/>
            <person name="Lucas S."/>
            <person name="Lapidus A."/>
            <person name="Barry K."/>
            <person name="Glavina del Rio T."/>
            <person name="Hammon N."/>
            <person name="Israni S."/>
            <person name="Dalin E."/>
            <person name="Tice H."/>
            <person name="Pitluck S."/>
            <person name="Sims D."/>
            <person name="Brettin T."/>
            <person name="Bruce D."/>
            <person name="Detter J.C."/>
            <person name="Han C."/>
            <person name="Tapia R."/>
            <person name="Brainard J."/>
            <person name="Schmutz J."/>
            <person name="Larimer F."/>
            <person name="Land M."/>
            <person name="Hauser L."/>
            <person name="Kyrpides N."/>
            <person name="Kim E."/>
            <person name="Ensigns S.A."/>
            <person name="Richardson P."/>
        </authorList>
    </citation>
    <scope>NUCLEOTIDE SEQUENCE [LARGE SCALE GENOMIC DNA]</scope>
    <source>
        <strain>ATCC BAA-1158 / Py2</strain>
    </source>
</reference>
<sequence length="129" mass="13833">MAKEATRVKRRERKNIASGVAHVNASFNNTMITITDAQGNTISWSSAGAMGFKGSRKSTPYAAQVAAEDAARKAAEHGMRTLEVEVSGPGSGRESALRALQAAGFLVTSIRDVTPIPHNGCRPRKRRRV</sequence>
<feature type="chain" id="PRO_1000141160" description="Small ribosomal subunit protein uS11">
    <location>
        <begin position="1"/>
        <end position="129"/>
    </location>
</feature>
<name>RS11_XANP2</name>
<dbReference type="EMBL" id="CP000781">
    <property type="protein sequence ID" value="ABS69993.1"/>
    <property type="molecule type" value="Genomic_DNA"/>
</dbReference>
<dbReference type="SMR" id="A7IPP7"/>
<dbReference type="STRING" id="78245.Xaut_4775"/>
<dbReference type="KEGG" id="xau:Xaut_4775"/>
<dbReference type="eggNOG" id="COG0100">
    <property type="taxonomic scope" value="Bacteria"/>
</dbReference>
<dbReference type="HOGENOM" id="CLU_072439_5_0_5"/>
<dbReference type="OrthoDB" id="9806415at2"/>
<dbReference type="PhylomeDB" id="A7IPP7"/>
<dbReference type="Proteomes" id="UP000002417">
    <property type="component" value="Chromosome"/>
</dbReference>
<dbReference type="GO" id="GO:1990904">
    <property type="term" value="C:ribonucleoprotein complex"/>
    <property type="evidence" value="ECO:0007669"/>
    <property type="project" value="UniProtKB-KW"/>
</dbReference>
<dbReference type="GO" id="GO:0005840">
    <property type="term" value="C:ribosome"/>
    <property type="evidence" value="ECO:0007669"/>
    <property type="project" value="UniProtKB-KW"/>
</dbReference>
<dbReference type="GO" id="GO:0019843">
    <property type="term" value="F:rRNA binding"/>
    <property type="evidence" value="ECO:0007669"/>
    <property type="project" value="UniProtKB-UniRule"/>
</dbReference>
<dbReference type="GO" id="GO:0003735">
    <property type="term" value="F:structural constituent of ribosome"/>
    <property type="evidence" value="ECO:0007669"/>
    <property type="project" value="InterPro"/>
</dbReference>
<dbReference type="GO" id="GO:0006412">
    <property type="term" value="P:translation"/>
    <property type="evidence" value="ECO:0007669"/>
    <property type="project" value="UniProtKB-UniRule"/>
</dbReference>
<dbReference type="FunFam" id="3.30.420.80:FF:000001">
    <property type="entry name" value="30S ribosomal protein S11"/>
    <property type="match status" value="1"/>
</dbReference>
<dbReference type="Gene3D" id="3.30.420.80">
    <property type="entry name" value="Ribosomal protein S11"/>
    <property type="match status" value="1"/>
</dbReference>
<dbReference type="HAMAP" id="MF_01310">
    <property type="entry name" value="Ribosomal_uS11"/>
    <property type="match status" value="1"/>
</dbReference>
<dbReference type="InterPro" id="IPR001971">
    <property type="entry name" value="Ribosomal_uS11"/>
</dbReference>
<dbReference type="InterPro" id="IPR019981">
    <property type="entry name" value="Ribosomal_uS11_bac-type"/>
</dbReference>
<dbReference type="InterPro" id="IPR018102">
    <property type="entry name" value="Ribosomal_uS11_CS"/>
</dbReference>
<dbReference type="InterPro" id="IPR036967">
    <property type="entry name" value="Ribosomal_uS11_sf"/>
</dbReference>
<dbReference type="NCBIfam" id="NF003698">
    <property type="entry name" value="PRK05309.1"/>
    <property type="match status" value="1"/>
</dbReference>
<dbReference type="NCBIfam" id="TIGR03632">
    <property type="entry name" value="uS11_bact"/>
    <property type="match status" value="1"/>
</dbReference>
<dbReference type="PANTHER" id="PTHR11759">
    <property type="entry name" value="40S RIBOSOMAL PROTEIN S14/30S RIBOSOMAL PROTEIN S11"/>
    <property type="match status" value="1"/>
</dbReference>
<dbReference type="Pfam" id="PF00411">
    <property type="entry name" value="Ribosomal_S11"/>
    <property type="match status" value="1"/>
</dbReference>
<dbReference type="PIRSF" id="PIRSF002131">
    <property type="entry name" value="Ribosomal_S11"/>
    <property type="match status" value="1"/>
</dbReference>
<dbReference type="SUPFAM" id="SSF53137">
    <property type="entry name" value="Translational machinery components"/>
    <property type="match status" value="1"/>
</dbReference>
<dbReference type="PROSITE" id="PS00054">
    <property type="entry name" value="RIBOSOMAL_S11"/>
    <property type="match status" value="1"/>
</dbReference>
<gene>
    <name evidence="1" type="primary">rpsK</name>
    <name type="ordered locus">Xaut_4775</name>
</gene>
<accession>A7IPP7</accession>
<organism>
    <name type="scientific">Xanthobacter autotrophicus (strain ATCC BAA-1158 / Py2)</name>
    <dbReference type="NCBI Taxonomy" id="78245"/>
    <lineage>
        <taxon>Bacteria</taxon>
        <taxon>Pseudomonadati</taxon>
        <taxon>Pseudomonadota</taxon>
        <taxon>Alphaproteobacteria</taxon>
        <taxon>Hyphomicrobiales</taxon>
        <taxon>Xanthobacteraceae</taxon>
        <taxon>Xanthobacter</taxon>
    </lineage>
</organism>
<protein>
    <recommendedName>
        <fullName evidence="1">Small ribosomal subunit protein uS11</fullName>
    </recommendedName>
    <alternativeName>
        <fullName evidence="2">30S ribosomal protein S11</fullName>
    </alternativeName>
</protein>
<keyword id="KW-1185">Reference proteome</keyword>
<keyword id="KW-0687">Ribonucleoprotein</keyword>
<keyword id="KW-0689">Ribosomal protein</keyword>
<keyword id="KW-0694">RNA-binding</keyword>
<keyword id="KW-0699">rRNA-binding</keyword>
<evidence type="ECO:0000255" key="1">
    <source>
        <dbReference type="HAMAP-Rule" id="MF_01310"/>
    </source>
</evidence>
<evidence type="ECO:0000305" key="2"/>